<evidence type="ECO:0000255" key="1">
    <source>
        <dbReference type="HAMAP-Rule" id="MF_00171"/>
    </source>
</evidence>
<accession>Q2J2C4</accession>
<gene>
    <name evidence="1" type="primary">truA</name>
    <name type="ordered locus">RPB_0675</name>
</gene>
<name>TRUA_RHOP2</name>
<dbReference type="EC" id="5.4.99.12" evidence="1"/>
<dbReference type="EMBL" id="CP000250">
    <property type="protein sequence ID" value="ABD05386.1"/>
    <property type="molecule type" value="Genomic_DNA"/>
</dbReference>
<dbReference type="RefSeq" id="WP_011439576.1">
    <property type="nucleotide sequence ID" value="NC_007778.1"/>
</dbReference>
<dbReference type="SMR" id="Q2J2C4"/>
<dbReference type="STRING" id="316058.RPB_0675"/>
<dbReference type="KEGG" id="rpb:RPB_0675"/>
<dbReference type="eggNOG" id="COG0101">
    <property type="taxonomic scope" value="Bacteria"/>
</dbReference>
<dbReference type="HOGENOM" id="CLU_014673_0_2_5"/>
<dbReference type="OrthoDB" id="9811823at2"/>
<dbReference type="Proteomes" id="UP000008809">
    <property type="component" value="Chromosome"/>
</dbReference>
<dbReference type="GO" id="GO:0003723">
    <property type="term" value="F:RNA binding"/>
    <property type="evidence" value="ECO:0007669"/>
    <property type="project" value="InterPro"/>
</dbReference>
<dbReference type="GO" id="GO:0160147">
    <property type="term" value="F:tRNA pseudouridine(38-40) synthase activity"/>
    <property type="evidence" value="ECO:0007669"/>
    <property type="project" value="UniProtKB-EC"/>
</dbReference>
<dbReference type="GO" id="GO:0031119">
    <property type="term" value="P:tRNA pseudouridine synthesis"/>
    <property type="evidence" value="ECO:0007669"/>
    <property type="project" value="UniProtKB-UniRule"/>
</dbReference>
<dbReference type="CDD" id="cd02570">
    <property type="entry name" value="PseudoU_synth_EcTruA"/>
    <property type="match status" value="1"/>
</dbReference>
<dbReference type="FunFam" id="3.30.70.580:FF:000001">
    <property type="entry name" value="tRNA pseudouridine synthase A"/>
    <property type="match status" value="1"/>
</dbReference>
<dbReference type="Gene3D" id="3.30.70.660">
    <property type="entry name" value="Pseudouridine synthase I, catalytic domain, C-terminal subdomain"/>
    <property type="match status" value="1"/>
</dbReference>
<dbReference type="Gene3D" id="3.30.70.580">
    <property type="entry name" value="Pseudouridine synthase I, catalytic domain, N-terminal subdomain"/>
    <property type="match status" value="1"/>
</dbReference>
<dbReference type="HAMAP" id="MF_00171">
    <property type="entry name" value="TruA"/>
    <property type="match status" value="1"/>
</dbReference>
<dbReference type="InterPro" id="IPR020103">
    <property type="entry name" value="PsdUridine_synth_cat_dom_sf"/>
</dbReference>
<dbReference type="InterPro" id="IPR001406">
    <property type="entry name" value="PsdUridine_synth_TruA"/>
</dbReference>
<dbReference type="InterPro" id="IPR020097">
    <property type="entry name" value="PsdUridine_synth_TruA_a/b_dom"/>
</dbReference>
<dbReference type="InterPro" id="IPR020095">
    <property type="entry name" value="PsdUridine_synth_TruA_C"/>
</dbReference>
<dbReference type="InterPro" id="IPR020094">
    <property type="entry name" value="TruA/RsuA/RluB/E/F_N"/>
</dbReference>
<dbReference type="NCBIfam" id="TIGR00071">
    <property type="entry name" value="hisT_truA"/>
    <property type="match status" value="1"/>
</dbReference>
<dbReference type="PANTHER" id="PTHR11142">
    <property type="entry name" value="PSEUDOURIDYLATE SYNTHASE"/>
    <property type="match status" value="1"/>
</dbReference>
<dbReference type="PANTHER" id="PTHR11142:SF0">
    <property type="entry name" value="TRNA PSEUDOURIDINE SYNTHASE-LIKE 1"/>
    <property type="match status" value="1"/>
</dbReference>
<dbReference type="Pfam" id="PF01416">
    <property type="entry name" value="PseudoU_synth_1"/>
    <property type="match status" value="2"/>
</dbReference>
<dbReference type="PIRSF" id="PIRSF001430">
    <property type="entry name" value="tRNA_psdUrid_synth"/>
    <property type="match status" value="1"/>
</dbReference>
<dbReference type="SUPFAM" id="SSF55120">
    <property type="entry name" value="Pseudouridine synthase"/>
    <property type="match status" value="1"/>
</dbReference>
<keyword id="KW-0413">Isomerase</keyword>
<keyword id="KW-1185">Reference proteome</keyword>
<keyword id="KW-0819">tRNA processing</keyword>
<reference key="1">
    <citation type="submission" date="2006-01" db="EMBL/GenBank/DDBJ databases">
        <title>Complete sequence of Rhodopseudomonas palustris HaA2.</title>
        <authorList>
            <consortium name="US DOE Joint Genome Institute"/>
            <person name="Copeland A."/>
            <person name="Lucas S."/>
            <person name="Lapidus A."/>
            <person name="Barry K."/>
            <person name="Detter J.C."/>
            <person name="Glavina T."/>
            <person name="Hammon N."/>
            <person name="Israni S."/>
            <person name="Pitluck S."/>
            <person name="Chain P."/>
            <person name="Malfatti S."/>
            <person name="Shin M."/>
            <person name="Vergez L."/>
            <person name="Schmutz J."/>
            <person name="Larimer F."/>
            <person name="Land M."/>
            <person name="Hauser L."/>
            <person name="Pelletier D.A."/>
            <person name="Kyrpides N."/>
            <person name="Anderson I."/>
            <person name="Oda Y."/>
            <person name="Harwood C.S."/>
            <person name="Richardson P."/>
        </authorList>
    </citation>
    <scope>NUCLEOTIDE SEQUENCE [LARGE SCALE GENOMIC DNA]</scope>
    <source>
        <strain>HaA2</strain>
    </source>
</reference>
<protein>
    <recommendedName>
        <fullName evidence="1">tRNA pseudouridine synthase A</fullName>
        <ecNumber evidence="1">5.4.99.12</ecNumber>
    </recommendedName>
    <alternativeName>
        <fullName evidence="1">tRNA pseudouridine(38-40) synthase</fullName>
    </alternativeName>
    <alternativeName>
        <fullName evidence="1">tRNA pseudouridylate synthase I</fullName>
    </alternativeName>
    <alternativeName>
        <fullName evidence="1">tRNA-uridine isomerase I</fullName>
    </alternativeName>
</protein>
<comment type="function">
    <text evidence="1">Formation of pseudouridine at positions 38, 39 and 40 in the anticodon stem and loop of transfer RNAs.</text>
</comment>
<comment type="catalytic activity">
    <reaction evidence="1">
        <text>uridine(38/39/40) in tRNA = pseudouridine(38/39/40) in tRNA</text>
        <dbReference type="Rhea" id="RHEA:22376"/>
        <dbReference type="Rhea" id="RHEA-COMP:10085"/>
        <dbReference type="Rhea" id="RHEA-COMP:10087"/>
        <dbReference type="ChEBI" id="CHEBI:65314"/>
        <dbReference type="ChEBI" id="CHEBI:65315"/>
        <dbReference type="EC" id="5.4.99.12"/>
    </reaction>
</comment>
<comment type="subunit">
    <text evidence="1">Homodimer.</text>
</comment>
<comment type="similarity">
    <text evidence="1">Belongs to the tRNA pseudouridine synthase TruA family.</text>
</comment>
<sequence>MPRYKLTIEYDGAPFCGWQLQPTLPSVQGALEAAALATCGEAVRVHGAGRTDAGVHALGQVAHVDIPKPFRADKLRDALNAHVRPHPIAVLSAELVADDFEARFSAIRRHYRYRIVNRRSNLALELGKVWRVPKPLDTDAMHRAAQVLIGKHDFTTFRDTECQAASPAKTLDVLDVVRNGDAVDIITNARSYLHSQVRSMVGSLVWVGEGRWTADDLAAALAARRRSACGPVAPPDGLYLVQVDY</sequence>
<organism>
    <name type="scientific">Rhodopseudomonas palustris (strain HaA2)</name>
    <dbReference type="NCBI Taxonomy" id="316058"/>
    <lineage>
        <taxon>Bacteria</taxon>
        <taxon>Pseudomonadati</taxon>
        <taxon>Pseudomonadota</taxon>
        <taxon>Alphaproteobacteria</taxon>
        <taxon>Hyphomicrobiales</taxon>
        <taxon>Nitrobacteraceae</taxon>
        <taxon>Rhodopseudomonas</taxon>
    </lineage>
</organism>
<proteinExistence type="inferred from homology"/>
<feature type="chain" id="PRO_1000097775" description="tRNA pseudouridine synthase A">
    <location>
        <begin position="1"/>
        <end position="245"/>
    </location>
</feature>
<feature type="active site" description="Nucleophile" evidence="1">
    <location>
        <position position="52"/>
    </location>
</feature>
<feature type="binding site" evidence="1">
    <location>
        <position position="111"/>
    </location>
    <ligand>
        <name>substrate</name>
    </ligand>
</feature>